<keyword id="KW-1064">Adaptive immunity</keyword>
<keyword id="KW-0025">Alternative splicing</keyword>
<keyword id="KW-0037">Angiogenesis</keyword>
<keyword id="KW-1003">Cell membrane</keyword>
<keyword id="KW-0182">Cone-rod dystrophy</keyword>
<keyword id="KW-0217">Developmental protein</keyword>
<keyword id="KW-0221">Differentiation</keyword>
<keyword id="KW-0225">Disease variant</keyword>
<keyword id="KW-1015">Disulfide bond</keyword>
<keyword id="KW-0325">Glycoprotein</keyword>
<keyword id="KW-0391">Immunity</keyword>
<keyword id="KW-0393">Immunoglobulin domain</keyword>
<keyword id="KW-0472">Membrane</keyword>
<keyword id="KW-0524">Neurogenesis</keyword>
<keyword id="KW-1267">Proteomics identification</keyword>
<keyword id="KW-1185">Reference proteome</keyword>
<keyword id="KW-0682">Retinitis pigmentosa</keyword>
<keyword id="KW-0732">Signal</keyword>
<keyword id="KW-0812">Transmembrane</keyword>
<keyword id="KW-1133">Transmembrane helix</keyword>
<reference key="1">
    <citation type="submission" date="1999-06" db="EMBL/GenBank/DDBJ databases">
        <title>Human semaphorin B.</title>
        <authorList>
            <person name="Seki N."/>
            <person name="Hattori A."/>
            <person name="Hayashi A."/>
            <person name="Kozuma S."/>
            <person name="Muramatsu M."/>
            <person name="Miyajima N."/>
            <person name="Saito T."/>
        </authorList>
    </citation>
    <scope>NUCLEOTIDE SEQUENCE [MRNA] (ISOFORM 1)</scope>
</reference>
<reference key="2">
    <citation type="journal article" date="2003" name="Genome Res.">
        <title>The secreted protein discovery initiative (SPDI), a large-scale effort to identify novel human secreted and transmembrane proteins: a bioinformatics assessment.</title>
        <authorList>
            <person name="Clark H.F."/>
            <person name="Gurney A.L."/>
            <person name="Abaya E."/>
            <person name="Baker K."/>
            <person name="Baldwin D.T."/>
            <person name="Brush J."/>
            <person name="Chen J."/>
            <person name="Chow B."/>
            <person name="Chui C."/>
            <person name="Crowley C."/>
            <person name="Currell B."/>
            <person name="Deuel B."/>
            <person name="Dowd P."/>
            <person name="Eaton D."/>
            <person name="Foster J.S."/>
            <person name="Grimaldi C."/>
            <person name="Gu Q."/>
            <person name="Hass P.E."/>
            <person name="Heldens S."/>
            <person name="Huang A."/>
            <person name="Kim H.S."/>
            <person name="Klimowski L."/>
            <person name="Jin Y."/>
            <person name="Johnson S."/>
            <person name="Lee J."/>
            <person name="Lewis L."/>
            <person name="Liao D."/>
            <person name="Mark M.R."/>
            <person name="Robbie E."/>
            <person name="Sanchez C."/>
            <person name="Schoenfeld J."/>
            <person name="Seshagiri S."/>
            <person name="Simmons L."/>
            <person name="Singh J."/>
            <person name="Smith V."/>
            <person name="Stinson J."/>
            <person name="Vagts A."/>
            <person name="Vandlen R.L."/>
            <person name="Watanabe C."/>
            <person name="Wieand D."/>
            <person name="Woods K."/>
            <person name="Xie M.-H."/>
            <person name="Yansura D.G."/>
            <person name="Yi S."/>
            <person name="Yu G."/>
            <person name="Yuan J."/>
            <person name="Zhang M."/>
            <person name="Zhang Z."/>
            <person name="Goddard A.D."/>
            <person name="Wood W.I."/>
            <person name="Godowski P.J."/>
            <person name="Gray A.M."/>
        </authorList>
    </citation>
    <scope>NUCLEOTIDE SEQUENCE [LARGE SCALE MRNA] (ISOFORM 1)</scope>
</reference>
<reference key="3">
    <citation type="journal article" date="2004" name="Nat. Genet.">
        <title>Complete sequencing and characterization of 21,243 full-length human cDNAs.</title>
        <authorList>
            <person name="Ota T."/>
            <person name="Suzuki Y."/>
            <person name="Nishikawa T."/>
            <person name="Otsuki T."/>
            <person name="Sugiyama T."/>
            <person name="Irie R."/>
            <person name="Wakamatsu A."/>
            <person name="Hayashi K."/>
            <person name="Sato H."/>
            <person name="Nagai K."/>
            <person name="Kimura K."/>
            <person name="Makita H."/>
            <person name="Sekine M."/>
            <person name="Obayashi M."/>
            <person name="Nishi T."/>
            <person name="Shibahara T."/>
            <person name="Tanaka T."/>
            <person name="Ishii S."/>
            <person name="Yamamoto J."/>
            <person name="Saito K."/>
            <person name="Kawai Y."/>
            <person name="Isono Y."/>
            <person name="Nakamura Y."/>
            <person name="Nagahari K."/>
            <person name="Murakami K."/>
            <person name="Yasuda T."/>
            <person name="Iwayanagi T."/>
            <person name="Wagatsuma M."/>
            <person name="Shiratori A."/>
            <person name="Sudo H."/>
            <person name="Hosoiri T."/>
            <person name="Kaku Y."/>
            <person name="Kodaira H."/>
            <person name="Kondo H."/>
            <person name="Sugawara M."/>
            <person name="Takahashi M."/>
            <person name="Kanda K."/>
            <person name="Yokoi T."/>
            <person name="Furuya T."/>
            <person name="Kikkawa E."/>
            <person name="Omura Y."/>
            <person name="Abe K."/>
            <person name="Kamihara K."/>
            <person name="Katsuta N."/>
            <person name="Sato K."/>
            <person name="Tanikawa M."/>
            <person name="Yamazaki M."/>
            <person name="Ninomiya K."/>
            <person name="Ishibashi T."/>
            <person name="Yamashita H."/>
            <person name="Murakawa K."/>
            <person name="Fujimori K."/>
            <person name="Tanai H."/>
            <person name="Kimata M."/>
            <person name="Watanabe M."/>
            <person name="Hiraoka S."/>
            <person name="Chiba Y."/>
            <person name="Ishida S."/>
            <person name="Ono Y."/>
            <person name="Takiguchi S."/>
            <person name="Watanabe S."/>
            <person name="Yosida M."/>
            <person name="Hotuta T."/>
            <person name="Kusano J."/>
            <person name="Kanehori K."/>
            <person name="Takahashi-Fujii A."/>
            <person name="Hara H."/>
            <person name="Tanase T.-O."/>
            <person name="Nomura Y."/>
            <person name="Togiya S."/>
            <person name="Komai F."/>
            <person name="Hara R."/>
            <person name="Takeuchi K."/>
            <person name="Arita M."/>
            <person name="Imose N."/>
            <person name="Musashino K."/>
            <person name="Yuuki H."/>
            <person name="Oshima A."/>
            <person name="Sasaki N."/>
            <person name="Aotsuka S."/>
            <person name="Yoshikawa Y."/>
            <person name="Matsunawa H."/>
            <person name="Ichihara T."/>
            <person name="Shiohata N."/>
            <person name="Sano S."/>
            <person name="Moriya S."/>
            <person name="Momiyama H."/>
            <person name="Satoh N."/>
            <person name="Takami S."/>
            <person name="Terashima Y."/>
            <person name="Suzuki O."/>
            <person name="Nakagawa S."/>
            <person name="Senoh A."/>
            <person name="Mizoguchi H."/>
            <person name="Goto Y."/>
            <person name="Shimizu F."/>
            <person name="Wakebe H."/>
            <person name="Hishigaki H."/>
            <person name="Watanabe T."/>
            <person name="Sugiyama A."/>
            <person name="Takemoto M."/>
            <person name="Kawakami B."/>
            <person name="Yamazaki M."/>
            <person name="Watanabe K."/>
            <person name="Kumagai A."/>
            <person name="Itakura S."/>
            <person name="Fukuzumi Y."/>
            <person name="Fujimori Y."/>
            <person name="Komiyama M."/>
            <person name="Tashiro H."/>
            <person name="Tanigami A."/>
            <person name="Fujiwara T."/>
            <person name="Ono T."/>
            <person name="Yamada K."/>
            <person name="Fujii Y."/>
            <person name="Ozaki K."/>
            <person name="Hirao M."/>
            <person name="Ohmori Y."/>
            <person name="Kawabata A."/>
            <person name="Hikiji T."/>
            <person name="Kobatake N."/>
            <person name="Inagaki H."/>
            <person name="Ikema Y."/>
            <person name="Okamoto S."/>
            <person name="Okitani R."/>
            <person name="Kawakami T."/>
            <person name="Noguchi S."/>
            <person name="Itoh T."/>
            <person name="Shigeta K."/>
            <person name="Senba T."/>
            <person name="Matsumura K."/>
            <person name="Nakajima Y."/>
            <person name="Mizuno T."/>
            <person name="Morinaga M."/>
            <person name="Sasaki M."/>
            <person name="Togashi T."/>
            <person name="Oyama M."/>
            <person name="Hata H."/>
            <person name="Watanabe M."/>
            <person name="Komatsu T."/>
            <person name="Mizushima-Sugano J."/>
            <person name="Satoh T."/>
            <person name="Shirai Y."/>
            <person name="Takahashi Y."/>
            <person name="Nakagawa K."/>
            <person name="Okumura K."/>
            <person name="Nagase T."/>
            <person name="Nomura N."/>
            <person name="Kikuchi H."/>
            <person name="Masuho Y."/>
            <person name="Yamashita R."/>
            <person name="Nakai K."/>
            <person name="Yada T."/>
            <person name="Nakamura Y."/>
            <person name="Ohara O."/>
            <person name="Isogai T."/>
            <person name="Sugano S."/>
        </authorList>
    </citation>
    <scope>NUCLEOTIDE SEQUENCE [LARGE SCALE MRNA] (ISOFORMS 1 AND 2)</scope>
    <source>
        <tissue>Placenta</tissue>
        <tissue>Tongue</tissue>
    </source>
</reference>
<reference key="4">
    <citation type="journal article" date="2006" name="Nature">
        <title>The DNA sequence and biological annotation of human chromosome 1.</title>
        <authorList>
            <person name="Gregory S.G."/>
            <person name="Barlow K.F."/>
            <person name="McLay K.E."/>
            <person name="Kaul R."/>
            <person name="Swarbreck D."/>
            <person name="Dunham A."/>
            <person name="Scott C.E."/>
            <person name="Howe K.L."/>
            <person name="Woodfine K."/>
            <person name="Spencer C.C.A."/>
            <person name="Jones M.C."/>
            <person name="Gillson C."/>
            <person name="Searle S."/>
            <person name="Zhou Y."/>
            <person name="Kokocinski F."/>
            <person name="McDonald L."/>
            <person name="Evans R."/>
            <person name="Phillips K."/>
            <person name="Atkinson A."/>
            <person name="Cooper R."/>
            <person name="Jones C."/>
            <person name="Hall R.E."/>
            <person name="Andrews T.D."/>
            <person name="Lloyd C."/>
            <person name="Ainscough R."/>
            <person name="Almeida J.P."/>
            <person name="Ambrose K.D."/>
            <person name="Anderson F."/>
            <person name="Andrew R.W."/>
            <person name="Ashwell R.I.S."/>
            <person name="Aubin K."/>
            <person name="Babbage A.K."/>
            <person name="Bagguley C.L."/>
            <person name="Bailey J."/>
            <person name="Beasley H."/>
            <person name="Bethel G."/>
            <person name="Bird C.P."/>
            <person name="Bray-Allen S."/>
            <person name="Brown J.Y."/>
            <person name="Brown A.J."/>
            <person name="Buckley D."/>
            <person name="Burton J."/>
            <person name="Bye J."/>
            <person name="Carder C."/>
            <person name="Chapman J.C."/>
            <person name="Clark S.Y."/>
            <person name="Clarke G."/>
            <person name="Clee C."/>
            <person name="Cobley V."/>
            <person name="Collier R.E."/>
            <person name="Corby N."/>
            <person name="Coville G.J."/>
            <person name="Davies J."/>
            <person name="Deadman R."/>
            <person name="Dunn M."/>
            <person name="Earthrowl M."/>
            <person name="Ellington A.G."/>
            <person name="Errington H."/>
            <person name="Frankish A."/>
            <person name="Frankland J."/>
            <person name="French L."/>
            <person name="Garner P."/>
            <person name="Garnett J."/>
            <person name="Gay L."/>
            <person name="Ghori M.R.J."/>
            <person name="Gibson R."/>
            <person name="Gilby L.M."/>
            <person name="Gillett W."/>
            <person name="Glithero R.J."/>
            <person name="Grafham D.V."/>
            <person name="Griffiths C."/>
            <person name="Griffiths-Jones S."/>
            <person name="Grocock R."/>
            <person name="Hammond S."/>
            <person name="Harrison E.S.I."/>
            <person name="Hart E."/>
            <person name="Haugen E."/>
            <person name="Heath P.D."/>
            <person name="Holmes S."/>
            <person name="Holt K."/>
            <person name="Howden P.J."/>
            <person name="Hunt A.R."/>
            <person name="Hunt S.E."/>
            <person name="Hunter G."/>
            <person name="Isherwood J."/>
            <person name="James R."/>
            <person name="Johnson C."/>
            <person name="Johnson D."/>
            <person name="Joy A."/>
            <person name="Kay M."/>
            <person name="Kershaw J.K."/>
            <person name="Kibukawa M."/>
            <person name="Kimberley A.M."/>
            <person name="King A."/>
            <person name="Knights A.J."/>
            <person name="Lad H."/>
            <person name="Laird G."/>
            <person name="Lawlor S."/>
            <person name="Leongamornlert D.A."/>
            <person name="Lloyd D.M."/>
            <person name="Loveland J."/>
            <person name="Lovell J."/>
            <person name="Lush M.J."/>
            <person name="Lyne R."/>
            <person name="Martin S."/>
            <person name="Mashreghi-Mohammadi M."/>
            <person name="Matthews L."/>
            <person name="Matthews N.S.W."/>
            <person name="McLaren S."/>
            <person name="Milne S."/>
            <person name="Mistry S."/>
            <person name="Moore M.J.F."/>
            <person name="Nickerson T."/>
            <person name="O'Dell C.N."/>
            <person name="Oliver K."/>
            <person name="Palmeiri A."/>
            <person name="Palmer S.A."/>
            <person name="Parker A."/>
            <person name="Patel D."/>
            <person name="Pearce A.V."/>
            <person name="Peck A.I."/>
            <person name="Pelan S."/>
            <person name="Phelps K."/>
            <person name="Phillimore B.J."/>
            <person name="Plumb R."/>
            <person name="Rajan J."/>
            <person name="Raymond C."/>
            <person name="Rouse G."/>
            <person name="Saenphimmachak C."/>
            <person name="Sehra H.K."/>
            <person name="Sheridan E."/>
            <person name="Shownkeen R."/>
            <person name="Sims S."/>
            <person name="Skuce C.D."/>
            <person name="Smith M."/>
            <person name="Steward C."/>
            <person name="Subramanian S."/>
            <person name="Sycamore N."/>
            <person name="Tracey A."/>
            <person name="Tromans A."/>
            <person name="Van Helmond Z."/>
            <person name="Wall M."/>
            <person name="Wallis J.M."/>
            <person name="White S."/>
            <person name="Whitehead S.L."/>
            <person name="Wilkinson J.E."/>
            <person name="Willey D.L."/>
            <person name="Williams H."/>
            <person name="Wilming L."/>
            <person name="Wray P.W."/>
            <person name="Wu Z."/>
            <person name="Coulson A."/>
            <person name="Vaudin M."/>
            <person name="Sulston J.E."/>
            <person name="Durbin R.M."/>
            <person name="Hubbard T."/>
            <person name="Wooster R."/>
            <person name="Dunham I."/>
            <person name="Carter N.P."/>
            <person name="McVean G."/>
            <person name="Ross M.T."/>
            <person name="Harrow J."/>
            <person name="Olson M.V."/>
            <person name="Beck S."/>
            <person name="Rogers J."/>
            <person name="Bentley D.R."/>
        </authorList>
    </citation>
    <scope>NUCLEOTIDE SEQUENCE [LARGE SCALE GENOMIC DNA]</scope>
</reference>
<reference key="5">
    <citation type="journal article" date="2004" name="Genome Res.">
        <title>The status, quality, and expansion of the NIH full-length cDNA project: the Mammalian Gene Collection (MGC).</title>
        <authorList>
            <consortium name="The MGC Project Team"/>
        </authorList>
    </citation>
    <scope>NUCLEOTIDE SEQUENCE [LARGE SCALE MRNA] (ISOFORM 1)</scope>
    <source>
        <tissue>Colon</tissue>
    </source>
</reference>
<reference key="6">
    <citation type="journal article" date="2012" name="Invest. Ophthalmol. Vis. Sci.">
        <title>SEMA4A mutations lead to susceptibility to light irradiation, oxidative stress, and ER stress in retinal pigment epithelial cells.</title>
        <authorList>
            <person name="Tsuruma K."/>
            <person name="Nishimura Y."/>
            <person name="Kishi S."/>
            <person name="Shimazawa M."/>
            <person name="Tanaka T."/>
            <person name="Hara H."/>
        </authorList>
    </citation>
    <scope>SUBCELLULAR LOCATION</scope>
    <scope>CHARACTERIZATION OF VARIANT GLN-713</scope>
    <scope>CHARACTERIZATION OF VARIANTS RP35 HIS-345 AND CYS-350</scope>
</reference>
<reference key="7">
    <citation type="journal article" date="2006" name="J. Med. Genet.">
        <title>Identification of novel mutations in the SEMA4A gene associated with retinal degenerative diseases.</title>
        <authorList>
            <person name="Abid A."/>
            <person name="Ismail M."/>
            <person name="Mehdi S.Q."/>
            <person name="Khaliq S."/>
        </authorList>
    </citation>
    <scope>VARIANTS RP35 HIS-345 AND CYS-350</scope>
    <scope>VARIANTS CORD10 HIS-345 AND CYS-350</scope>
    <scope>VARIANT GLN-713</scope>
</reference>
<reference key="8">
    <citation type="journal article" date="2018" name="Ophthalmic Genet.">
        <title>On variants and disease-causing mutations: Case studies of a SEMA4A variant identified in inherited blindness.</title>
        <authorList>
            <person name="Bryant L."/>
            <person name="Lozynska O."/>
            <person name="Han G."/>
            <person name="Morgan J.I.W."/>
            <person name="Gai X."/>
            <person name="Maguire A.M."/>
            <person name="Aleman T."/>
            <person name="Bennett J."/>
        </authorList>
    </citation>
    <scope>VARIANT GLN-713</scope>
</reference>
<gene>
    <name type="primary">SEMA4A</name>
    <name type="synonym">SEMAB</name>
    <name type="synonym">SEMB</name>
    <name type="ORF">UNQ783/PRO1317</name>
</gene>
<name>SEM4A_HUMAN</name>
<sequence>MALPALGLDPWSLLGLFLFQLLQLLLPTTTAGGGGQGPMPRVRYYAGDERRALSFFHQKGLQDFDTLLLSGDGNTLYVGAREAILALDIQDPGVPRLKNMIPWPASDRKKSECAFKKKSNETQCFNFIRVLVSYNVTHLYTCGTFAFSPACTFIELQDSYLLPISEDKVMEGKGQSPFDPAHKHTAVLVDGMLYSGTMNNFLGSEPILMRTLGSQPVLKTDNFLRWLHHDASFVAAIPSTQVVYFFFEETASEFDFFERLHTSRVARVCKNDVGGEKLLQKKWTTFLKAQLLCTQPGQLPFNVIRHAVLLPADSPTAPHIYAVFTSQWQVGGTRSSAVCAFSLLDIERVFKGKYKELNKETSRWTTYRGPETNPRPGSCSVGPSSDKALTFMKDHFLMDEQVVGTPLLVKSGVEYTRLAVETAQGLDGHSHLVMYLGTTTGSLHKAVVSGDSSAHLVEEIQLFPDPEPVRNLQLAPTQGAVFVGFSGGVWRVPRANCSVYESCVDCVLARDPHCAWDPESRTCCLLSAPNLNSWKQDMERGNPEWACASGPMSRSLRPQSRPQIIKEVLAVPNSILELPCPHLSALASYYWSHGPAAVPEASSTVYNGSLLLIVQDGVGGLYQCWATENGFSYPVISYWVDSQDQTLALDPELAGIPREHVKVPLTRVSGGAALAAQQSYWPHFVTVTVLFALVLSGALIILVASPLRALRARGKVQGCETLRPGEKAPLSREQHLQSPKECRTSASDVDADNNCLGTEVA</sequence>
<proteinExistence type="evidence at protein level"/>
<evidence type="ECO:0000250" key="1">
    <source>
        <dbReference type="UniProtKB" id="Q62178"/>
    </source>
</evidence>
<evidence type="ECO:0000255" key="2"/>
<evidence type="ECO:0000255" key="3">
    <source>
        <dbReference type="PROSITE-ProRule" id="PRU00352"/>
    </source>
</evidence>
<evidence type="ECO:0000256" key="4">
    <source>
        <dbReference type="SAM" id="MobiDB-lite"/>
    </source>
</evidence>
<evidence type="ECO:0000269" key="5">
    <source>
    </source>
</evidence>
<evidence type="ECO:0000269" key="6">
    <source>
    </source>
</evidence>
<evidence type="ECO:0000269" key="7">
    <source>
    </source>
</evidence>
<evidence type="ECO:0000303" key="8">
    <source>
    </source>
</evidence>
<evidence type="ECO:0000305" key="9"/>
<protein>
    <recommendedName>
        <fullName>Semaphorin-4A</fullName>
    </recommendedName>
    <alternativeName>
        <fullName>Semaphorin-B</fullName>
        <shortName>Sema B</shortName>
    </alternativeName>
</protein>
<feature type="signal peptide" evidence="2">
    <location>
        <begin position="1"/>
        <end position="32"/>
    </location>
</feature>
<feature type="chain" id="PRO_0000032322" description="Semaphorin-4A">
    <location>
        <begin position="33"/>
        <end position="761"/>
    </location>
</feature>
<feature type="topological domain" description="Extracellular" evidence="2">
    <location>
        <begin position="33"/>
        <end position="683"/>
    </location>
</feature>
<feature type="transmembrane region" description="Helical" evidence="2">
    <location>
        <begin position="684"/>
        <end position="704"/>
    </location>
</feature>
<feature type="topological domain" description="Cytoplasmic" evidence="2">
    <location>
        <begin position="705"/>
        <end position="761"/>
    </location>
</feature>
<feature type="domain" description="Sema" evidence="3">
    <location>
        <begin position="36"/>
        <end position="494"/>
    </location>
</feature>
<feature type="domain" description="PSI">
    <location>
        <begin position="496"/>
        <end position="548"/>
    </location>
</feature>
<feature type="domain" description="Ig-like C2-type">
    <location>
        <begin position="573"/>
        <end position="631"/>
    </location>
</feature>
<feature type="region of interest" description="Disordered" evidence="4">
    <location>
        <begin position="722"/>
        <end position="749"/>
    </location>
</feature>
<feature type="compositionally biased region" description="Basic and acidic residues" evidence="4">
    <location>
        <begin position="723"/>
        <end position="743"/>
    </location>
</feature>
<feature type="glycosylation site" description="N-linked (GlcNAc...) asparagine" evidence="2">
    <location>
        <position position="120"/>
    </location>
</feature>
<feature type="glycosylation site" description="N-linked (GlcNAc...) asparagine" evidence="2">
    <location>
        <position position="135"/>
    </location>
</feature>
<feature type="glycosylation site" description="N-linked (GlcNAc...) asparagine" evidence="2">
    <location>
        <position position="496"/>
    </location>
</feature>
<feature type="glycosylation site" description="N-linked (GlcNAc...) asparagine" evidence="2">
    <location>
        <position position="607"/>
    </location>
</feature>
<feature type="disulfide bond" evidence="3">
    <location>
        <begin position="113"/>
        <end position="124"/>
    </location>
</feature>
<feature type="disulfide bond" evidence="3">
    <location>
        <begin position="142"/>
        <end position="151"/>
    </location>
</feature>
<feature type="disulfide bond" evidence="3">
    <location>
        <begin position="269"/>
        <end position="379"/>
    </location>
</feature>
<feature type="disulfide bond" evidence="3">
    <location>
        <begin position="293"/>
        <end position="339"/>
    </location>
</feature>
<feature type="disulfide bond" evidence="3">
    <location>
        <begin position="497"/>
        <end position="514"/>
    </location>
</feature>
<feature type="disulfide bond" evidence="3">
    <location>
        <begin position="506"/>
        <end position="523"/>
    </location>
</feature>
<feature type="disulfide bond" evidence="3">
    <location>
        <begin position="580"/>
        <end position="624"/>
    </location>
</feature>
<feature type="splice variant" id="VSP_046381" description="In isoform 2." evidence="8">
    <location>
        <begin position="1"/>
        <end position="99"/>
    </location>
</feature>
<feature type="splice variant" id="VSP_046382" description="In isoform 2." evidence="8">
    <location>
        <begin position="122"/>
        <end position="154"/>
    </location>
</feature>
<feature type="sequence variant" id="VAR_028322" description="In RP35 and CORD10; heterozygous compound with C-350; loss of localization to cell membrane; dbSNP:rs267607033." evidence="5 6">
    <original>D</original>
    <variation>H</variation>
    <location>
        <position position="345"/>
    </location>
</feature>
<feature type="sequence variant" id="VAR_028323" description="In RP35 and CORD10; heterozygous compound with H-345; loss of localization to cell membrane; dbSNP:rs267607034." evidence="5 6">
    <original>F</original>
    <variation>C</variation>
    <location>
        <position position="350"/>
    </location>
</feature>
<feature type="sequence variant" id="VAR_028324" description="In dbSNP:rs2075164.">
    <original>R</original>
    <variation>Q</variation>
    <location>
        <position position="510"/>
    </location>
</feature>
<feature type="sequence variant" id="VAR_028325" description="No effect on localization to cell membrane; dbSNP:rs41265017." evidence="5 6 7">
    <original>R</original>
    <variation>Q</variation>
    <location>
        <position position="713"/>
    </location>
</feature>
<feature type="sequence conflict" description="In Ref. 1." evidence="9" ref="1">
    <original>CTQPGQLPFNVIRHAVLLPADSPTAPHIYAVFTSQW</original>
    <variation>SAPSRGSCPSTSSATRSCSPPILPQLPTSTQSSPPSG</variation>
    <location>
        <begin position="293"/>
        <end position="328"/>
    </location>
</feature>
<feature type="sequence conflict" description="In Ref. 1; BAB20087." evidence="9" ref="1">
    <original>Y</original>
    <variation>F</variation>
    <location>
        <position position="354"/>
    </location>
</feature>
<feature type="sequence conflict" description="In Ref. 3; BAG52288." evidence="9" ref="3">
    <original>D</original>
    <variation>G</variation>
    <location>
        <position position="641"/>
    </location>
</feature>
<dbReference type="EMBL" id="AB029394">
    <property type="protein sequence ID" value="BAB20087.1"/>
    <property type="molecule type" value="mRNA"/>
</dbReference>
<dbReference type="EMBL" id="AY358531">
    <property type="protein sequence ID" value="AAQ88895.1"/>
    <property type="molecule type" value="mRNA"/>
</dbReference>
<dbReference type="EMBL" id="AK091127">
    <property type="protein sequence ID" value="BAG52288.1"/>
    <property type="molecule type" value="mRNA"/>
</dbReference>
<dbReference type="EMBL" id="AK315547">
    <property type="protein sequence ID" value="BAG37925.1"/>
    <property type="molecule type" value="mRNA"/>
</dbReference>
<dbReference type="EMBL" id="AL135927">
    <property type="status" value="NOT_ANNOTATED_CDS"/>
    <property type="molecule type" value="Genomic_DNA"/>
</dbReference>
<dbReference type="EMBL" id="BC020974">
    <property type="protein sequence ID" value="AAH20974.1"/>
    <property type="molecule type" value="mRNA"/>
</dbReference>
<dbReference type="CCDS" id="CCDS1132.1">
    <molecule id="Q9H3S1-1"/>
</dbReference>
<dbReference type="CCDS" id="CCDS53378.1">
    <molecule id="Q9H3S1-2"/>
</dbReference>
<dbReference type="RefSeq" id="NP_001180229.1">
    <molecule id="Q9H3S1-1"/>
    <property type="nucleotide sequence ID" value="NM_001193300.2"/>
</dbReference>
<dbReference type="RefSeq" id="NP_001180230.1">
    <molecule id="Q9H3S1-1"/>
    <property type="nucleotide sequence ID" value="NM_001193301.2"/>
</dbReference>
<dbReference type="RefSeq" id="NP_001180231.1">
    <molecule id="Q9H3S1-2"/>
    <property type="nucleotide sequence ID" value="NM_001193302.2"/>
</dbReference>
<dbReference type="RefSeq" id="NP_001357496.1">
    <molecule id="Q9H3S1-1"/>
    <property type="nucleotide sequence ID" value="NM_001370567.1"/>
</dbReference>
<dbReference type="RefSeq" id="NP_071762.2">
    <molecule id="Q9H3S1-1"/>
    <property type="nucleotide sequence ID" value="NM_022367.3"/>
</dbReference>
<dbReference type="RefSeq" id="XP_011508174.1">
    <molecule id="Q9H3S1-1"/>
    <property type="nucleotide sequence ID" value="XM_011509872.3"/>
</dbReference>
<dbReference type="RefSeq" id="XP_011508175.1">
    <property type="nucleotide sequence ID" value="XM_011509873.2"/>
</dbReference>
<dbReference type="RefSeq" id="XP_016857545.1">
    <property type="nucleotide sequence ID" value="XM_017002056.1"/>
</dbReference>
<dbReference type="RefSeq" id="XP_047283620.1">
    <molecule id="Q9H3S1-1"/>
    <property type="nucleotide sequence ID" value="XM_047427664.1"/>
</dbReference>
<dbReference type="RefSeq" id="XP_047283626.1">
    <molecule id="Q9H3S1-1"/>
    <property type="nucleotide sequence ID" value="XM_047427670.1"/>
</dbReference>
<dbReference type="RefSeq" id="XP_047283627.1">
    <molecule id="Q9H3S1-1"/>
    <property type="nucleotide sequence ID" value="XM_047427671.1"/>
</dbReference>
<dbReference type="RefSeq" id="XP_054194143.1">
    <molecule id="Q9H3S1-1"/>
    <property type="nucleotide sequence ID" value="XM_054338168.1"/>
</dbReference>
<dbReference type="RefSeq" id="XP_054194144.1">
    <molecule id="Q9H3S1-1"/>
    <property type="nucleotide sequence ID" value="XM_054338169.1"/>
</dbReference>
<dbReference type="RefSeq" id="XP_054194145.1">
    <molecule id="Q9H3S1-1"/>
    <property type="nucleotide sequence ID" value="XM_054338170.1"/>
</dbReference>
<dbReference type="RefSeq" id="XP_054194146.1">
    <molecule id="Q9H3S1-1"/>
    <property type="nucleotide sequence ID" value="XM_054338171.1"/>
</dbReference>
<dbReference type="RefSeq" id="XP_054194147.1">
    <molecule id="Q9H3S1-1"/>
    <property type="nucleotide sequence ID" value="XM_054338172.1"/>
</dbReference>
<dbReference type="SMR" id="Q9H3S1"/>
<dbReference type="BioGRID" id="122108">
    <property type="interactions" value="14"/>
</dbReference>
<dbReference type="CORUM" id="Q9H3S1"/>
<dbReference type="FunCoup" id="Q9H3S1">
    <property type="interactions" value="98"/>
</dbReference>
<dbReference type="IntAct" id="Q9H3S1">
    <property type="interactions" value="13"/>
</dbReference>
<dbReference type="MINT" id="Q9H3S1"/>
<dbReference type="STRING" id="9606.ENSP00000357265"/>
<dbReference type="GlyCosmos" id="Q9H3S1">
    <property type="glycosylation" value="4 sites, No reported glycans"/>
</dbReference>
<dbReference type="GlyGen" id="Q9H3S1">
    <property type="glycosylation" value="4 sites, 7 N-linked glycans (2 sites)"/>
</dbReference>
<dbReference type="iPTMnet" id="Q9H3S1"/>
<dbReference type="PhosphoSitePlus" id="Q9H3S1"/>
<dbReference type="BioMuta" id="SEMA4A"/>
<dbReference type="DMDM" id="29840871"/>
<dbReference type="MassIVE" id="Q9H3S1"/>
<dbReference type="PaxDb" id="9606-ENSP00000357268"/>
<dbReference type="PeptideAtlas" id="Q9H3S1"/>
<dbReference type="ProteomicsDB" id="64964"/>
<dbReference type="ProteomicsDB" id="80746">
    <molecule id="Q9H3S1-1"/>
</dbReference>
<dbReference type="Antibodypedia" id="20428">
    <property type="antibodies" value="374 antibodies from 34 providers"/>
</dbReference>
<dbReference type="DNASU" id="64218"/>
<dbReference type="Ensembl" id="ENST00000355014.6">
    <molecule id="Q9H3S1-1"/>
    <property type="protein sequence ID" value="ENSP00000347117.2"/>
    <property type="gene ID" value="ENSG00000196189.14"/>
</dbReference>
<dbReference type="Ensembl" id="ENST00000368282.1">
    <molecule id="Q9H3S1-1"/>
    <property type="protein sequence ID" value="ENSP00000357265.1"/>
    <property type="gene ID" value="ENSG00000196189.14"/>
</dbReference>
<dbReference type="Ensembl" id="ENST00000368284.5">
    <molecule id="Q9H3S1-2"/>
    <property type="protein sequence ID" value="ENSP00000357267.1"/>
    <property type="gene ID" value="ENSG00000196189.14"/>
</dbReference>
<dbReference type="Ensembl" id="ENST00000368285.8">
    <molecule id="Q9H3S1-1"/>
    <property type="protein sequence ID" value="ENSP00000357268.3"/>
    <property type="gene ID" value="ENSG00000196189.14"/>
</dbReference>
<dbReference type="GeneID" id="64218"/>
<dbReference type="KEGG" id="hsa:64218"/>
<dbReference type="MANE-Select" id="ENST00000368285.8">
    <property type="protein sequence ID" value="ENSP00000357268.3"/>
    <property type="RefSeq nucleotide sequence ID" value="NM_022367.4"/>
    <property type="RefSeq protein sequence ID" value="NP_071762.2"/>
</dbReference>
<dbReference type="UCSC" id="uc001fnl.4">
    <molecule id="Q9H3S1-1"/>
    <property type="organism name" value="human"/>
</dbReference>
<dbReference type="AGR" id="HGNC:10729"/>
<dbReference type="CTD" id="64218"/>
<dbReference type="DisGeNET" id="64218"/>
<dbReference type="GeneCards" id="SEMA4A"/>
<dbReference type="GeneReviews" id="SEMA4A"/>
<dbReference type="HGNC" id="HGNC:10729">
    <property type="gene designation" value="SEMA4A"/>
</dbReference>
<dbReference type="HPA" id="ENSG00000196189">
    <property type="expression patterns" value="Tissue enhanced (epididymis)"/>
</dbReference>
<dbReference type="MalaCards" id="SEMA4A"/>
<dbReference type="MIM" id="607292">
    <property type="type" value="gene"/>
</dbReference>
<dbReference type="MIM" id="610282">
    <property type="type" value="phenotype"/>
</dbReference>
<dbReference type="MIM" id="610283">
    <property type="type" value="phenotype"/>
</dbReference>
<dbReference type="neXtProt" id="NX_Q9H3S1"/>
<dbReference type="OpenTargets" id="ENSG00000196189"/>
<dbReference type="Orphanet" id="1872">
    <property type="disease" value="Cone rod dystrophy"/>
</dbReference>
<dbReference type="Orphanet" id="440437">
    <property type="disease" value="Familial colorectal cancer Type X"/>
</dbReference>
<dbReference type="Orphanet" id="791">
    <property type="disease" value="Retinitis pigmentosa"/>
</dbReference>
<dbReference type="PharmGKB" id="PA35651"/>
<dbReference type="VEuPathDB" id="HostDB:ENSG00000196189"/>
<dbReference type="eggNOG" id="KOG3611">
    <property type="taxonomic scope" value="Eukaryota"/>
</dbReference>
<dbReference type="GeneTree" id="ENSGT00940000161509"/>
<dbReference type="InParanoid" id="Q9H3S1"/>
<dbReference type="OMA" id="KNNETQC"/>
<dbReference type="OrthoDB" id="9988752at2759"/>
<dbReference type="PAN-GO" id="Q9H3S1">
    <property type="GO annotations" value="10 GO annotations based on evolutionary models"/>
</dbReference>
<dbReference type="PhylomeDB" id="Q9H3S1"/>
<dbReference type="TreeFam" id="TF316102"/>
<dbReference type="PathwayCommons" id="Q9H3S1"/>
<dbReference type="Reactome" id="R-HSA-416700">
    <property type="pathway name" value="Other semaphorin interactions"/>
</dbReference>
<dbReference type="SignaLink" id="Q9H3S1"/>
<dbReference type="BioGRID-ORCS" id="64218">
    <property type="hits" value="13 hits in 1147 CRISPR screens"/>
</dbReference>
<dbReference type="ChiTaRS" id="SEMA4A">
    <property type="organism name" value="human"/>
</dbReference>
<dbReference type="GeneWiki" id="SEMA4A"/>
<dbReference type="GenomeRNAi" id="64218"/>
<dbReference type="Pharos" id="Q9H3S1">
    <property type="development level" value="Tbio"/>
</dbReference>
<dbReference type="PRO" id="PR:Q9H3S1"/>
<dbReference type="Proteomes" id="UP000005640">
    <property type="component" value="Chromosome 1"/>
</dbReference>
<dbReference type="RNAct" id="Q9H3S1">
    <property type="molecule type" value="protein"/>
</dbReference>
<dbReference type="Bgee" id="ENSG00000196189">
    <property type="expression patterns" value="Expressed in monocyte and 160 other cell types or tissues"/>
</dbReference>
<dbReference type="ExpressionAtlas" id="Q9H3S1">
    <property type="expression patterns" value="baseline and differential"/>
</dbReference>
<dbReference type="GO" id="GO:0005886">
    <property type="term" value="C:plasma membrane"/>
    <property type="evidence" value="ECO:0000318"/>
    <property type="project" value="GO_Central"/>
</dbReference>
<dbReference type="GO" id="GO:0045499">
    <property type="term" value="F:chemorepellent activity"/>
    <property type="evidence" value="ECO:0000318"/>
    <property type="project" value="GO_Central"/>
</dbReference>
<dbReference type="GO" id="GO:0038191">
    <property type="term" value="F:neuropilin binding"/>
    <property type="evidence" value="ECO:0000318"/>
    <property type="project" value="GO_Central"/>
</dbReference>
<dbReference type="GO" id="GO:0030215">
    <property type="term" value="F:semaphorin receptor binding"/>
    <property type="evidence" value="ECO:0000318"/>
    <property type="project" value="GO_Central"/>
</dbReference>
<dbReference type="GO" id="GO:0001525">
    <property type="term" value="P:angiogenesis"/>
    <property type="evidence" value="ECO:0007669"/>
    <property type="project" value="UniProtKB-KW"/>
</dbReference>
<dbReference type="GO" id="GO:0007411">
    <property type="term" value="P:axon guidance"/>
    <property type="evidence" value="ECO:0000318"/>
    <property type="project" value="GO_Central"/>
</dbReference>
<dbReference type="GO" id="GO:0050919">
    <property type="term" value="P:negative chemotaxis"/>
    <property type="evidence" value="ECO:0000318"/>
    <property type="project" value="GO_Central"/>
</dbReference>
<dbReference type="GO" id="GO:0016525">
    <property type="term" value="P:negative regulation of angiogenesis"/>
    <property type="evidence" value="ECO:0007669"/>
    <property type="project" value="Ensembl"/>
</dbReference>
<dbReference type="GO" id="GO:0001755">
    <property type="term" value="P:neural crest cell migration"/>
    <property type="evidence" value="ECO:0000318"/>
    <property type="project" value="GO_Central"/>
</dbReference>
<dbReference type="GO" id="GO:0030335">
    <property type="term" value="P:positive regulation of cell migration"/>
    <property type="evidence" value="ECO:0000318"/>
    <property type="project" value="GO_Central"/>
</dbReference>
<dbReference type="GO" id="GO:1904891">
    <property type="term" value="P:positive regulation of excitatory synapse assembly"/>
    <property type="evidence" value="ECO:0000250"/>
    <property type="project" value="UniProtKB"/>
</dbReference>
<dbReference type="GO" id="GO:1905704">
    <property type="term" value="P:positive regulation of inhibitory synapse assembly"/>
    <property type="evidence" value="ECO:0000250"/>
    <property type="project" value="UniProtKB"/>
</dbReference>
<dbReference type="GO" id="GO:0008360">
    <property type="term" value="P:regulation of cell shape"/>
    <property type="evidence" value="ECO:0007669"/>
    <property type="project" value="Ensembl"/>
</dbReference>
<dbReference type="GO" id="GO:0010594">
    <property type="term" value="P:regulation of endothelial cell migration"/>
    <property type="evidence" value="ECO:0007669"/>
    <property type="project" value="Ensembl"/>
</dbReference>
<dbReference type="GO" id="GO:0071526">
    <property type="term" value="P:semaphorin-plexin signaling pathway"/>
    <property type="evidence" value="ECO:0000318"/>
    <property type="project" value="GO_Central"/>
</dbReference>
<dbReference type="GO" id="GO:0045063">
    <property type="term" value="P:T-helper 1 cell differentiation"/>
    <property type="evidence" value="ECO:0007669"/>
    <property type="project" value="Ensembl"/>
</dbReference>
<dbReference type="CDD" id="cd11256">
    <property type="entry name" value="Sema_4A"/>
    <property type="match status" value="1"/>
</dbReference>
<dbReference type="FunFam" id="3.30.1680.10:FF:000019">
    <property type="entry name" value="Semaphorin 4A"/>
    <property type="match status" value="1"/>
</dbReference>
<dbReference type="FunFam" id="2.130.10.10:FF:000257">
    <property type="entry name" value="semaphorin-4A isoform X2"/>
    <property type="match status" value="1"/>
</dbReference>
<dbReference type="Gene3D" id="3.30.1680.10">
    <property type="entry name" value="ligand-binding face of the semaphorins, domain 2"/>
    <property type="match status" value="1"/>
</dbReference>
<dbReference type="Gene3D" id="2.130.10.10">
    <property type="entry name" value="YVTN repeat-like/Quinoprotein amine dehydrogenase"/>
    <property type="match status" value="1"/>
</dbReference>
<dbReference type="InterPro" id="IPR002165">
    <property type="entry name" value="Plexin_repeat"/>
</dbReference>
<dbReference type="InterPro" id="IPR016201">
    <property type="entry name" value="PSI"/>
</dbReference>
<dbReference type="InterPro" id="IPR001627">
    <property type="entry name" value="Semap_dom"/>
</dbReference>
<dbReference type="InterPro" id="IPR036352">
    <property type="entry name" value="Semap_dom_sf"/>
</dbReference>
<dbReference type="InterPro" id="IPR027231">
    <property type="entry name" value="Semaphorin"/>
</dbReference>
<dbReference type="InterPro" id="IPR015943">
    <property type="entry name" value="WD40/YVTN_repeat-like_dom_sf"/>
</dbReference>
<dbReference type="PANTHER" id="PTHR11036">
    <property type="entry name" value="SEMAPHORIN"/>
    <property type="match status" value="1"/>
</dbReference>
<dbReference type="PANTHER" id="PTHR11036:SF15">
    <property type="entry name" value="SEMAPHORIN-4A"/>
    <property type="match status" value="1"/>
</dbReference>
<dbReference type="Pfam" id="PF01437">
    <property type="entry name" value="PSI"/>
    <property type="match status" value="1"/>
</dbReference>
<dbReference type="Pfam" id="PF01403">
    <property type="entry name" value="Sema"/>
    <property type="match status" value="1"/>
</dbReference>
<dbReference type="SMART" id="SM00423">
    <property type="entry name" value="PSI"/>
    <property type="match status" value="1"/>
</dbReference>
<dbReference type="SMART" id="SM00630">
    <property type="entry name" value="Sema"/>
    <property type="match status" value="1"/>
</dbReference>
<dbReference type="SUPFAM" id="SSF103575">
    <property type="entry name" value="Plexin repeat"/>
    <property type="match status" value="1"/>
</dbReference>
<dbReference type="SUPFAM" id="SSF101912">
    <property type="entry name" value="Sema domain"/>
    <property type="match status" value="1"/>
</dbReference>
<dbReference type="PROSITE" id="PS51004">
    <property type="entry name" value="SEMA"/>
    <property type="match status" value="1"/>
</dbReference>
<accession>Q9H3S1</accession>
<accession>B2RDH8</accession>
<accession>B3KR76</accession>
<accession>Q5TCI5</accession>
<accession>Q5TCJ6</accession>
<accession>Q8WUA9</accession>
<comment type="function">
    <text evidence="1">Cell surface receptor for PLXNB1, PLXNB2, PLXNB3 and PLXND1 that plays an important role in cell-cell signaling (By similarity). Regulates glutamatergic and GABAergic synapse development (By similarity). Promotes the development of inhibitory synapses in a PLXNB1-dependent manner and promotes the development of excitatory synapses in a PLXNB2-dependent manner (By similarity). Plays a role in priming antigen-specific T-cells, promotes differentiation of Th1 T-helper cells, and thereby contributes to adaptive immunity (By similarity). Promotes phosphorylation of TIMD2 (By similarity). Inhibits angiogenesis (By similarity). Promotes axon growth cone collapse (By similarity). Inhibits axonal extension by providing local signals to specify territories inaccessible for growing axons (By similarity).</text>
</comment>
<comment type="subunit">
    <text evidence="1">Interacts with PLXNB1, PLXNB2, PLXNB3, PLXND1 and TIMD2 (By similarity).</text>
</comment>
<comment type="interaction">
    <interactant intactId="EBI-3924922">
        <id>Q9H3S1</id>
    </interactant>
    <interactant intactId="EBI-310731">
        <id>Q9Y4D7</id>
        <label>PLXND1</label>
    </interactant>
    <organismsDiffer>false</organismsDiffer>
    <experiments>2</experiments>
</comment>
<comment type="subcellular location">
    <subcellularLocation>
        <location evidence="6">Cell membrane</location>
        <topology evidence="2">Single-pass type I membrane protein</topology>
    </subcellularLocation>
</comment>
<comment type="alternative products">
    <event type="alternative splicing"/>
    <isoform>
        <id>Q9H3S1-1</id>
        <name>1</name>
        <sequence type="displayed"/>
    </isoform>
    <isoform>
        <id>Q9H3S1-2</id>
        <name>2</name>
        <sequence type="described" ref="VSP_046381 VSP_046382"/>
    </isoform>
</comment>
<comment type="disease" evidence="5 6">
    <disease id="DI-00992">
        <name>Retinitis pigmentosa 35</name>
        <acronym>RP35</acronym>
        <description>A retinal dystrophy belonging to the group of pigmentary retinopathies. Retinitis pigmentosa is characterized by retinal pigment deposits visible on fundus examination and primary loss of rod photoreceptor cells followed by secondary loss of cone photoreceptors. Patients typically have night vision blindness and loss of midperipheral visual field. As their condition progresses, they lose their far peripheral visual field and eventually central vision as well.</description>
        <dbReference type="MIM" id="610282"/>
    </disease>
    <text>The disease is caused by variants affecting the gene represented in this entry.</text>
</comment>
<comment type="disease" evidence="5">
    <disease id="DI-00324">
        <name>Cone-rod dystrophy 10</name>
        <acronym>CORD10</acronym>
        <description>An inherited retinal dystrophy characterized by retinal pigment deposits visible on fundus examination, predominantly in the macular region, and initial loss of cone photoreceptors followed by rod degeneration. This leads to decreased visual acuity and sensitivity in the central visual field, followed by loss of peripheral vision. Severe loss of vision occurs earlier than in retinitis pigmentosa, due to cone photoreceptors degenerating at a higher rate than rod photoreceptors.</description>
        <dbReference type="MIM" id="610283"/>
    </disease>
    <text>The disease is caused by variants affecting the gene represented in this entry.</text>
</comment>
<comment type="similarity">
    <text evidence="9">Belongs to the semaphorin family.</text>
</comment>
<organism>
    <name type="scientific">Homo sapiens</name>
    <name type="common">Human</name>
    <dbReference type="NCBI Taxonomy" id="9606"/>
    <lineage>
        <taxon>Eukaryota</taxon>
        <taxon>Metazoa</taxon>
        <taxon>Chordata</taxon>
        <taxon>Craniata</taxon>
        <taxon>Vertebrata</taxon>
        <taxon>Euteleostomi</taxon>
        <taxon>Mammalia</taxon>
        <taxon>Eutheria</taxon>
        <taxon>Euarchontoglires</taxon>
        <taxon>Primates</taxon>
        <taxon>Haplorrhini</taxon>
        <taxon>Catarrhini</taxon>
        <taxon>Hominidae</taxon>
        <taxon>Homo</taxon>
    </lineage>
</organism>